<accession>Q58910</accession>
<protein>
    <recommendedName>
        <fullName>Uncharacterized protein MJ1515</fullName>
    </recommendedName>
</protein>
<reference key="1">
    <citation type="journal article" date="1996" name="Science">
        <title>Complete genome sequence of the methanogenic archaeon, Methanococcus jannaschii.</title>
        <authorList>
            <person name="Bult C.J."/>
            <person name="White O."/>
            <person name="Olsen G.J."/>
            <person name="Zhou L."/>
            <person name="Fleischmann R.D."/>
            <person name="Sutton G.G."/>
            <person name="Blake J.A."/>
            <person name="FitzGerald L.M."/>
            <person name="Clayton R.A."/>
            <person name="Gocayne J.D."/>
            <person name="Kerlavage A.R."/>
            <person name="Dougherty B.A."/>
            <person name="Tomb J.-F."/>
            <person name="Adams M.D."/>
            <person name="Reich C.I."/>
            <person name="Overbeek R."/>
            <person name="Kirkness E.F."/>
            <person name="Weinstock K.G."/>
            <person name="Merrick J.M."/>
            <person name="Glodek A."/>
            <person name="Scott J.L."/>
            <person name="Geoghagen N.S.M."/>
            <person name="Weidman J.F."/>
            <person name="Fuhrmann J.L."/>
            <person name="Nguyen D."/>
            <person name="Utterback T.R."/>
            <person name="Kelley J.M."/>
            <person name="Peterson J.D."/>
            <person name="Sadow P.W."/>
            <person name="Hanna M.C."/>
            <person name="Cotton M.D."/>
            <person name="Roberts K.M."/>
            <person name="Hurst M.A."/>
            <person name="Kaine B.P."/>
            <person name="Borodovsky M."/>
            <person name="Klenk H.-P."/>
            <person name="Fraser C.M."/>
            <person name="Smith H.O."/>
            <person name="Woese C.R."/>
            <person name="Venter J.C."/>
        </authorList>
    </citation>
    <scope>NUCLEOTIDE SEQUENCE [LARGE SCALE GENOMIC DNA]</scope>
    <source>
        <strain>ATCC 43067 / DSM 2661 / JAL-1 / JCM 10045 / NBRC 100440</strain>
    </source>
</reference>
<gene>
    <name type="ordered locus">MJ1515</name>
</gene>
<dbReference type="EMBL" id="L77117">
    <property type="protein sequence ID" value="AAB99533.1"/>
    <property type="molecule type" value="Genomic_DNA"/>
</dbReference>
<dbReference type="PIR" id="B64489">
    <property type="entry name" value="B64489"/>
</dbReference>
<dbReference type="RefSeq" id="WP_010871038.1">
    <property type="nucleotide sequence ID" value="NC_000909.1"/>
</dbReference>
<dbReference type="SMR" id="Q58910"/>
<dbReference type="STRING" id="243232.MJ_1515"/>
<dbReference type="PaxDb" id="243232-MJ_1515"/>
<dbReference type="EnsemblBacteria" id="AAB99533">
    <property type="protein sequence ID" value="AAB99533"/>
    <property type="gene ID" value="MJ_1515"/>
</dbReference>
<dbReference type="GeneID" id="1452422"/>
<dbReference type="KEGG" id="mja:MJ_1515"/>
<dbReference type="eggNOG" id="arCOG03639">
    <property type="taxonomic scope" value="Archaea"/>
</dbReference>
<dbReference type="eggNOG" id="arCOG07614">
    <property type="taxonomic scope" value="Archaea"/>
</dbReference>
<dbReference type="HOGENOM" id="CLU_059273_0_1_2"/>
<dbReference type="InParanoid" id="Q58910"/>
<dbReference type="OrthoDB" id="350529at2157"/>
<dbReference type="PhylomeDB" id="Q58910"/>
<dbReference type="Proteomes" id="UP000000805">
    <property type="component" value="Chromosome"/>
</dbReference>
<dbReference type="CDD" id="cd01908">
    <property type="entry name" value="YafJ"/>
    <property type="match status" value="1"/>
</dbReference>
<dbReference type="Gene3D" id="3.60.20.10">
    <property type="entry name" value="Glutamine Phosphoribosylpyrophosphate, subunit 1, domain 1"/>
    <property type="match status" value="1"/>
</dbReference>
<dbReference type="Gene3D" id="1.10.10.10">
    <property type="entry name" value="Winged helix-like DNA-binding domain superfamily/Winged helix DNA-binding domain"/>
    <property type="match status" value="1"/>
</dbReference>
<dbReference type="InterPro" id="IPR026869">
    <property type="entry name" value="EgtC-like"/>
</dbReference>
<dbReference type="InterPro" id="IPR017932">
    <property type="entry name" value="GATase_2_dom"/>
</dbReference>
<dbReference type="InterPro" id="IPR029055">
    <property type="entry name" value="Ntn_hydrolases_N"/>
</dbReference>
<dbReference type="InterPro" id="IPR036388">
    <property type="entry name" value="WH-like_DNA-bd_sf"/>
</dbReference>
<dbReference type="PANTHER" id="PTHR42824">
    <property type="entry name" value="GLUTAMINE AMIDOTRANSFERASE"/>
    <property type="match status" value="1"/>
</dbReference>
<dbReference type="PANTHER" id="PTHR42824:SF1">
    <property type="entry name" value="GLUTAMINE AMIDOTRANSFERASE YAFJ-RELATED"/>
    <property type="match status" value="1"/>
</dbReference>
<dbReference type="Pfam" id="PF13230">
    <property type="entry name" value="GATase_4"/>
    <property type="match status" value="1"/>
</dbReference>
<dbReference type="SUPFAM" id="SSF56235">
    <property type="entry name" value="N-terminal nucleophile aminohydrolases (Ntn hydrolases)"/>
    <property type="match status" value="1"/>
</dbReference>
<dbReference type="PROSITE" id="PS51278">
    <property type="entry name" value="GATASE_TYPE_2"/>
    <property type="match status" value="1"/>
</dbReference>
<organism>
    <name type="scientific">Methanocaldococcus jannaschii (strain ATCC 43067 / DSM 2661 / JAL-1 / JCM 10045 / NBRC 100440)</name>
    <name type="common">Methanococcus jannaschii</name>
    <dbReference type="NCBI Taxonomy" id="243232"/>
    <lineage>
        <taxon>Archaea</taxon>
        <taxon>Methanobacteriati</taxon>
        <taxon>Methanobacteriota</taxon>
        <taxon>Methanomada group</taxon>
        <taxon>Methanococci</taxon>
        <taxon>Methanococcales</taxon>
        <taxon>Methanocaldococcaceae</taxon>
        <taxon>Methanocaldococcus</taxon>
    </lineage>
</organism>
<proteinExistence type="inferred from homology"/>
<name>Y1515_METJA</name>
<feature type="initiator methionine" description="Removed" evidence="1">
    <location>
        <position position="1"/>
    </location>
</feature>
<feature type="chain" id="PRO_0000107386" description="Uncharacterized protein MJ1515">
    <location>
        <begin position="2"/>
        <end position="355"/>
    </location>
</feature>
<feature type="domain" description="Glutamine amidotransferase type-2" evidence="2">
    <location>
        <begin position="2"/>
        <end position="248"/>
    </location>
</feature>
<feature type="active site" description="For GATase activity" evidence="1">
    <location>
        <position position="2"/>
    </location>
</feature>
<sequence>MCELLGICFNKKVNVELSLNSFKHRSEDHPNGWGIAFYPDGFVRVIKEPIKMNEALLAECVRWTKIKSNIFIAHIRKASAGSESYVNTHPFVRKLEDKEIAFAHNGTLLGYEDLELDGYYPIGETDSEYVFCYLLSQIEKREIEWNKEGFDEMLDILLDINYYGAFNCLFSDGEYLFAYKDYRGRRELHFLKRKPPYGRIRLEDEDYIINLGDVKSVREEGFIIATNPLTNEDWKSFENGELMVFKNGEMIYSNKRLTDLELKILKILRESPHRVSLKKIIENLEYLSRNIRHDASVVRIGIRSLLDKGYIKQDSRDTVNWDDLEATFYTKPEKRVEIDKRLKGFRWRRNRIIMS</sequence>
<keyword id="KW-0315">Glutamine amidotransferase</keyword>
<keyword id="KW-1185">Reference proteome</keyword>
<evidence type="ECO:0000250" key="1"/>
<evidence type="ECO:0000255" key="2">
    <source>
        <dbReference type="PROSITE-ProRule" id="PRU00609"/>
    </source>
</evidence>